<organism>
    <name type="scientific">Mycoplasma pneumoniae (strain ATCC 29342 / M129 / Subtype 1)</name>
    <name type="common">Mycoplasmoides pneumoniae</name>
    <dbReference type="NCBI Taxonomy" id="272634"/>
    <lineage>
        <taxon>Bacteria</taxon>
        <taxon>Bacillati</taxon>
        <taxon>Mycoplasmatota</taxon>
        <taxon>Mycoplasmoidales</taxon>
        <taxon>Mycoplasmoidaceae</taxon>
        <taxon>Mycoplasmoides</taxon>
    </lineage>
</organism>
<comment type="subcellular location">
    <subcellularLocation>
        <location evidence="2">Cell membrane</location>
        <topology evidence="2">Multi-pass membrane protein</topology>
    </subcellularLocation>
</comment>
<name>Y276_MYCPN</name>
<feature type="chain" id="PRO_0000210439" description="Uncharacterized protein MG135 homolog">
    <location>
        <begin position="1"/>
        <end position="285"/>
    </location>
</feature>
<feature type="transmembrane region" description="Helical" evidence="1">
    <location>
        <begin position="6"/>
        <end position="26"/>
    </location>
</feature>
<feature type="transmembrane region" description="Helical" evidence="1">
    <location>
        <begin position="38"/>
        <end position="58"/>
    </location>
</feature>
<feature type="transmembrane region" description="Helical" evidence="1">
    <location>
        <begin position="84"/>
        <end position="104"/>
    </location>
</feature>
<feature type="transmembrane region" description="Helical" evidence="1">
    <location>
        <begin position="110"/>
        <end position="130"/>
    </location>
</feature>
<feature type="transmembrane region" description="Helical" evidence="1">
    <location>
        <begin position="153"/>
        <end position="173"/>
    </location>
</feature>
<feature type="transmembrane region" description="Helical" evidence="1">
    <location>
        <begin position="176"/>
        <end position="196"/>
    </location>
</feature>
<feature type="transmembrane region" description="Helical" evidence="1">
    <location>
        <begin position="236"/>
        <end position="256"/>
    </location>
</feature>
<keyword id="KW-1003">Cell membrane</keyword>
<keyword id="KW-0472">Membrane</keyword>
<keyword id="KW-1185">Reference proteome</keyword>
<keyword id="KW-0812">Transmembrane</keyword>
<keyword id="KW-1133">Transmembrane helix</keyword>
<proteinExistence type="predicted"/>
<protein>
    <recommendedName>
        <fullName>Uncharacterized protein MG135 homolog</fullName>
    </recommendedName>
</protein>
<gene>
    <name type="ordered locus">MPN_276</name>
    <name type="ORF">A65_orf285</name>
    <name type="ORF">MP559</name>
</gene>
<dbReference type="EMBL" id="U00089">
    <property type="protein sequence ID" value="AAB96207.1"/>
    <property type="molecule type" value="Genomic_DNA"/>
</dbReference>
<dbReference type="PIR" id="S73885">
    <property type="entry name" value="S73885"/>
</dbReference>
<dbReference type="RefSeq" id="NP_109964.1">
    <property type="nucleotide sequence ID" value="NC_000912.1"/>
</dbReference>
<dbReference type="RefSeq" id="WP_010874633.1">
    <property type="nucleotide sequence ID" value="NZ_OU342337.1"/>
</dbReference>
<dbReference type="STRING" id="272634.MPN_276"/>
<dbReference type="EnsemblBacteria" id="AAB96207">
    <property type="protein sequence ID" value="AAB96207"/>
    <property type="gene ID" value="MPN_276"/>
</dbReference>
<dbReference type="KEGG" id="mpn:MPN_276"/>
<dbReference type="PATRIC" id="fig|272634.6.peg.296"/>
<dbReference type="HOGENOM" id="CLU_993286_0_0_14"/>
<dbReference type="OrthoDB" id="404003at2"/>
<dbReference type="BioCyc" id="MPNE272634:G1GJ3-433-MONOMER"/>
<dbReference type="Proteomes" id="UP000000808">
    <property type="component" value="Chromosome"/>
</dbReference>
<dbReference type="GO" id="GO:0005886">
    <property type="term" value="C:plasma membrane"/>
    <property type="evidence" value="ECO:0007669"/>
    <property type="project" value="UniProtKB-SubCell"/>
</dbReference>
<dbReference type="InterPro" id="IPR035319">
    <property type="entry name" value="DUF5378"/>
</dbReference>
<dbReference type="Pfam" id="PF17349">
    <property type="entry name" value="DUF5378"/>
    <property type="match status" value="1"/>
</dbReference>
<evidence type="ECO:0000255" key="1"/>
<evidence type="ECO:0000305" key="2"/>
<sequence length="285" mass="32050">MQSLNYLVVILTVAGVLVILGFTPLIRKLKIQFYCLQVFAAILFLYVFFGRQIIYIFPDIYGTAAKAKNAVANVPLDSLRLSRIFLLDLCPFFALIGPIFIFLRQKKVAGVLAIFGFYGAAITLFGELIFTPLKQEEIVKFLFVGLENNQVYFMMHFLSFLLSLAVFLWDDGFSLISFFYIHVFALAYLSYVALMVNIFKGQITGNTTGILAEDWLSGEYKNVAVFLKLDPKNADLIFGVSFGLSYFAIVLLTVLVNIPTFIQLTKDKQMVKLALQLKKAQASVA</sequence>
<accession>P75501</accession>
<reference key="1">
    <citation type="journal article" date="1996" name="Nucleic Acids Res.">
        <title>Complete sequence analysis of the genome of the bacterium Mycoplasma pneumoniae.</title>
        <authorList>
            <person name="Himmelreich R."/>
            <person name="Hilbert H."/>
            <person name="Plagens H."/>
            <person name="Pirkl E."/>
            <person name="Li B.-C."/>
            <person name="Herrmann R."/>
        </authorList>
    </citation>
    <scope>NUCLEOTIDE SEQUENCE [LARGE SCALE GENOMIC DNA]</scope>
    <source>
        <strain>ATCC 29342 / M129 / Subtype 1</strain>
    </source>
</reference>